<gene>
    <name type="primary">ykfF</name>
    <name type="ordered locus">b0249</name>
    <name type="ordered locus">JW5023</name>
</gene>
<name>YKFF_ECOLI</name>
<evidence type="ECO:0000305" key="1"/>
<evidence type="ECO:0007829" key="2">
    <source>
        <dbReference type="PDB" id="2HJJ"/>
    </source>
</evidence>
<accession>P75677</accession>
<accession>Q9R2D8</accession>
<reference key="1">
    <citation type="submission" date="1996-02" db="EMBL/GenBank/DDBJ databases">
        <title>Systematic sequencing of the Escherichia coli genome: analysis of the 4.0 - 6.0 min (189,987 - 281,416bp) region.</title>
        <authorList>
            <person name="Takemoto K."/>
            <person name="Mori H."/>
            <person name="Murayama N."/>
            <person name="Kataoka K."/>
            <person name="Yano M."/>
            <person name="Itoh T."/>
            <person name="Yamamoto Y."/>
            <person name="Inokuchi H."/>
            <person name="Miki T."/>
            <person name="Hatada E."/>
            <person name="Fukuda R."/>
            <person name="Ichihara S."/>
            <person name="Mizuno T."/>
            <person name="Makino K."/>
            <person name="Nakata A."/>
            <person name="Yura T."/>
            <person name="Sampei G."/>
            <person name="Mizobuchi K."/>
        </authorList>
    </citation>
    <scope>NUCLEOTIDE SEQUENCE [LARGE SCALE GENOMIC DNA]</scope>
    <source>
        <strain>K12 / W3110 / ATCC 27325 / DSM 5911</strain>
    </source>
</reference>
<reference key="2">
    <citation type="journal article" date="1997" name="Science">
        <title>The complete genome sequence of Escherichia coli K-12.</title>
        <authorList>
            <person name="Blattner F.R."/>
            <person name="Plunkett G. III"/>
            <person name="Bloch C.A."/>
            <person name="Perna N.T."/>
            <person name="Burland V."/>
            <person name="Riley M."/>
            <person name="Collado-Vides J."/>
            <person name="Glasner J.D."/>
            <person name="Rode C.K."/>
            <person name="Mayhew G.F."/>
            <person name="Gregor J."/>
            <person name="Davis N.W."/>
            <person name="Kirkpatrick H.A."/>
            <person name="Goeden M.A."/>
            <person name="Rose D.J."/>
            <person name="Mau B."/>
            <person name="Shao Y."/>
        </authorList>
    </citation>
    <scope>NUCLEOTIDE SEQUENCE [LARGE SCALE GENOMIC DNA]</scope>
    <source>
        <strain>K12 / MG1655 / ATCC 47076</strain>
    </source>
</reference>
<reference key="3">
    <citation type="journal article" date="2006" name="Mol. Syst. Biol.">
        <title>Highly accurate genome sequences of Escherichia coli K-12 strains MG1655 and W3110.</title>
        <authorList>
            <person name="Hayashi K."/>
            <person name="Morooka N."/>
            <person name="Yamamoto Y."/>
            <person name="Fujita K."/>
            <person name="Isono K."/>
            <person name="Choi S."/>
            <person name="Ohtsubo E."/>
            <person name="Baba T."/>
            <person name="Wanner B.L."/>
            <person name="Mori H."/>
            <person name="Horiuchi T."/>
        </authorList>
    </citation>
    <scope>NUCLEOTIDE SEQUENCE [LARGE SCALE GENOMIC DNA]</scope>
    <source>
        <strain>K12 / W3110 / ATCC 27325 / DSM 5911</strain>
    </source>
</reference>
<protein>
    <recommendedName>
        <fullName>UPF0401 protein YkfF</fullName>
    </recommendedName>
</protein>
<dbReference type="EMBL" id="U00096">
    <property type="protein sequence ID" value="AAC73352.1"/>
    <property type="molecule type" value="Genomic_DNA"/>
</dbReference>
<dbReference type="EMBL" id="AP009048">
    <property type="protein sequence ID" value="BAA77918.2"/>
    <property type="molecule type" value="Genomic_DNA"/>
</dbReference>
<dbReference type="PIR" id="A64750">
    <property type="entry name" value="A64750"/>
</dbReference>
<dbReference type="RefSeq" id="NP_414783.1">
    <property type="nucleotide sequence ID" value="NC_000913.3"/>
</dbReference>
<dbReference type="RefSeq" id="WP_000194654.1">
    <property type="nucleotide sequence ID" value="NZ_LN832404.1"/>
</dbReference>
<dbReference type="PDB" id="2HJJ">
    <property type="method" value="NMR"/>
    <property type="chains" value="A=1-79"/>
</dbReference>
<dbReference type="PDBsum" id="2HJJ"/>
<dbReference type="BMRB" id="P75677"/>
<dbReference type="SMR" id="P75677"/>
<dbReference type="BioGRID" id="4263097">
    <property type="interactions" value="3"/>
</dbReference>
<dbReference type="FunCoup" id="P75677">
    <property type="interactions" value="31"/>
</dbReference>
<dbReference type="STRING" id="511145.b0249"/>
<dbReference type="PaxDb" id="511145-b0249"/>
<dbReference type="EnsemblBacteria" id="AAC73352">
    <property type="protein sequence ID" value="AAC73352"/>
    <property type="gene ID" value="b0249"/>
</dbReference>
<dbReference type="GeneID" id="948839"/>
<dbReference type="KEGG" id="ecj:JW5023"/>
<dbReference type="KEGG" id="eco:b0249"/>
<dbReference type="KEGG" id="ecoc:C3026_01185"/>
<dbReference type="KEGG" id="ecoc:C3026_23920"/>
<dbReference type="PATRIC" id="fig|511145.12.peg.251"/>
<dbReference type="EchoBASE" id="EB4031"/>
<dbReference type="eggNOG" id="ENOG50332RS">
    <property type="taxonomic scope" value="Bacteria"/>
</dbReference>
<dbReference type="HOGENOM" id="CLU_182912_1_0_6"/>
<dbReference type="InParanoid" id="P75677"/>
<dbReference type="OMA" id="RYITRYG"/>
<dbReference type="OrthoDB" id="6480897at2"/>
<dbReference type="PhylomeDB" id="P75677"/>
<dbReference type="BioCyc" id="EcoCyc:G6124-MONOMER"/>
<dbReference type="EvolutionaryTrace" id="P75677"/>
<dbReference type="PRO" id="PR:P75677"/>
<dbReference type="Proteomes" id="UP000000625">
    <property type="component" value="Chromosome"/>
</dbReference>
<dbReference type="Gene3D" id="3.30.160.130">
    <property type="entry name" value="ykff protein like domains"/>
    <property type="match status" value="1"/>
</dbReference>
<dbReference type="InterPro" id="IPR009253">
    <property type="entry name" value="DUF905"/>
</dbReference>
<dbReference type="InterPro" id="IPR038612">
    <property type="entry name" value="YkfF-like_sf"/>
</dbReference>
<dbReference type="Pfam" id="PF06006">
    <property type="entry name" value="DUF905"/>
    <property type="match status" value="1"/>
</dbReference>
<dbReference type="SUPFAM" id="SSF54786">
    <property type="entry name" value="YcfA/nrd intein domain"/>
    <property type="match status" value="1"/>
</dbReference>
<proteinExistence type="evidence at protein level"/>
<keyword id="KW-0002">3D-structure</keyword>
<keyword id="KW-1185">Reference proteome</keyword>
<feature type="chain" id="PRO_0000168549" description="UPF0401 protein YkfF">
    <location>
        <begin position="1"/>
        <end position="79"/>
    </location>
</feature>
<feature type="helix" evidence="2">
    <location>
        <begin position="14"/>
        <end position="23"/>
    </location>
</feature>
<feature type="strand" evidence="2">
    <location>
        <begin position="27"/>
        <end position="31"/>
    </location>
</feature>
<feature type="strand" evidence="2">
    <location>
        <begin position="33"/>
        <end position="35"/>
    </location>
</feature>
<feature type="strand" evidence="2">
    <location>
        <begin position="38"/>
        <end position="42"/>
    </location>
</feature>
<feature type="strand" evidence="2">
    <location>
        <begin position="48"/>
        <end position="56"/>
    </location>
</feature>
<feature type="helix" evidence="2">
    <location>
        <begin position="59"/>
        <end position="67"/>
    </location>
</feature>
<feature type="turn" evidence="2">
    <location>
        <begin position="68"/>
        <end position="74"/>
    </location>
</feature>
<sequence>MTQSVLLPPGPFTRRQAQAVTTTYSNITLEDDQGSHFRLVVRDTEGRMVWRAWNFEPDAGEGLNRYIRTSGIRTDTATR</sequence>
<organism>
    <name type="scientific">Escherichia coli (strain K12)</name>
    <dbReference type="NCBI Taxonomy" id="83333"/>
    <lineage>
        <taxon>Bacteria</taxon>
        <taxon>Pseudomonadati</taxon>
        <taxon>Pseudomonadota</taxon>
        <taxon>Gammaproteobacteria</taxon>
        <taxon>Enterobacterales</taxon>
        <taxon>Enterobacteriaceae</taxon>
        <taxon>Escherichia</taxon>
    </lineage>
</organism>
<comment type="similarity">
    <text evidence="1">Belongs to the UPF0401 family.</text>
</comment>